<organism>
    <name type="scientific">Prochlorococcus marinus (strain NATL1A)</name>
    <dbReference type="NCBI Taxonomy" id="167555"/>
    <lineage>
        <taxon>Bacteria</taxon>
        <taxon>Bacillati</taxon>
        <taxon>Cyanobacteriota</taxon>
        <taxon>Cyanophyceae</taxon>
        <taxon>Synechococcales</taxon>
        <taxon>Prochlorococcaceae</taxon>
        <taxon>Prochlorococcus</taxon>
    </lineage>
</organism>
<feature type="chain" id="PRO_0000321384" description="Adenine phosphoribosyltransferase">
    <location>
        <begin position="1"/>
        <end position="172"/>
    </location>
</feature>
<reference key="1">
    <citation type="journal article" date="2007" name="PLoS Genet.">
        <title>Patterns and implications of gene gain and loss in the evolution of Prochlorococcus.</title>
        <authorList>
            <person name="Kettler G.C."/>
            <person name="Martiny A.C."/>
            <person name="Huang K."/>
            <person name="Zucker J."/>
            <person name="Coleman M.L."/>
            <person name="Rodrigue S."/>
            <person name="Chen F."/>
            <person name="Lapidus A."/>
            <person name="Ferriera S."/>
            <person name="Johnson J."/>
            <person name="Steglich C."/>
            <person name="Church G.M."/>
            <person name="Richardson P."/>
            <person name="Chisholm S.W."/>
        </authorList>
    </citation>
    <scope>NUCLEOTIDE SEQUENCE [LARGE SCALE GENOMIC DNA]</scope>
    <source>
        <strain>NATL1A</strain>
    </source>
</reference>
<sequence length="172" mass="19275">MDHLKKYITEINDYPKKGIVFKDLNPIYKEPKAWKELMFPLQNLISTKKPDYIAGIESRGFISASALAFKLEIGLITIRKPNKLPGEVIGTNYKLEYGEDRLEIQQNIIEKDSKILLFDDLLATGGTAGAAGKLIKKAGGNLIGYAFLVELTELKGRENLDSNLLVETLIKY</sequence>
<name>APT_PROM1</name>
<protein>
    <recommendedName>
        <fullName evidence="1">Adenine phosphoribosyltransferase</fullName>
        <shortName evidence="1">APRT</shortName>
        <ecNumber evidence="1">2.4.2.7</ecNumber>
    </recommendedName>
</protein>
<comment type="function">
    <text evidence="1">Catalyzes a salvage reaction resulting in the formation of AMP, that is energically less costly than de novo synthesis.</text>
</comment>
<comment type="catalytic activity">
    <reaction evidence="1">
        <text>AMP + diphosphate = 5-phospho-alpha-D-ribose 1-diphosphate + adenine</text>
        <dbReference type="Rhea" id="RHEA:16609"/>
        <dbReference type="ChEBI" id="CHEBI:16708"/>
        <dbReference type="ChEBI" id="CHEBI:33019"/>
        <dbReference type="ChEBI" id="CHEBI:58017"/>
        <dbReference type="ChEBI" id="CHEBI:456215"/>
        <dbReference type="EC" id="2.4.2.7"/>
    </reaction>
</comment>
<comment type="pathway">
    <text evidence="1">Purine metabolism; AMP biosynthesis via salvage pathway; AMP from adenine: step 1/1.</text>
</comment>
<comment type="subunit">
    <text evidence="1">Homodimer.</text>
</comment>
<comment type="subcellular location">
    <subcellularLocation>
        <location evidence="1">Cytoplasm</location>
    </subcellularLocation>
</comment>
<comment type="similarity">
    <text evidence="1">Belongs to the purine/pyrimidine phosphoribosyltransferase family.</text>
</comment>
<proteinExistence type="inferred from homology"/>
<dbReference type="EC" id="2.4.2.7" evidence="1"/>
<dbReference type="EMBL" id="CP000553">
    <property type="protein sequence ID" value="ABM75615.1"/>
    <property type="molecule type" value="Genomic_DNA"/>
</dbReference>
<dbReference type="RefSeq" id="WP_011823735.1">
    <property type="nucleotide sequence ID" value="NC_008819.1"/>
</dbReference>
<dbReference type="SMR" id="A2C2A5"/>
<dbReference type="KEGG" id="pme:NATL1_10571"/>
<dbReference type="eggNOG" id="COG0503">
    <property type="taxonomic scope" value="Bacteria"/>
</dbReference>
<dbReference type="HOGENOM" id="CLU_063339_3_0_3"/>
<dbReference type="UniPathway" id="UPA00588">
    <property type="reaction ID" value="UER00646"/>
</dbReference>
<dbReference type="Proteomes" id="UP000002592">
    <property type="component" value="Chromosome"/>
</dbReference>
<dbReference type="GO" id="GO:0005737">
    <property type="term" value="C:cytoplasm"/>
    <property type="evidence" value="ECO:0007669"/>
    <property type="project" value="UniProtKB-SubCell"/>
</dbReference>
<dbReference type="GO" id="GO:0002055">
    <property type="term" value="F:adenine binding"/>
    <property type="evidence" value="ECO:0007669"/>
    <property type="project" value="TreeGrafter"/>
</dbReference>
<dbReference type="GO" id="GO:0003999">
    <property type="term" value="F:adenine phosphoribosyltransferase activity"/>
    <property type="evidence" value="ECO:0007669"/>
    <property type="project" value="UniProtKB-UniRule"/>
</dbReference>
<dbReference type="GO" id="GO:0016208">
    <property type="term" value="F:AMP binding"/>
    <property type="evidence" value="ECO:0007669"/>
    <property type="project" value="TreeGrafter"/>
</dbReference>
<dbReference type="GO" id="GO:0006168">
    <property type="term" value="P:adenine salvage"/>
    <property type="evidence" value="ECO:0007669"/>
    <property type="project" value="InterPro"/>
</dbReference>
<dbReference type="GO" id="GO:0044209">
    <property type="term" value="P:AMP salvage"/>
    <property type="evidence" value="ECO:0007669"/>
    <property type="project" value="UniProtKB-UniRule"/>
</dbReference>
<dbReference type="GO" id="GO:0006166">
    <property type="term" value="P:purine ribonucleoside salvage"/>
    <property type="evidence" value="ECO:0007669"/>
    <property type="project" value="UniProtKB-KW"/>
</dbReference>
<dbReference type="CDD" id="cd06223">
    <property type="entry name" value="PRTases_typeI"/>
    <property type="match status" value="1"/>
</dbReference>
<dbReference type="FunFam" id="3.40.50.2020:FF:000021">
    <property type="entry name" value="Adenine phosphoribosyltransferase"/>
    <property type="match status" value="1"/>
</dbReference>
<dbReference type="Gene3D" id="3.40.50.2020">
    <property type="match status" value="1"/>
</dbReference>
<dbReference type="HAMAP" id="MF_00004">
    <property type="entry name" value="Aden_phosphoribosyltr"/>
    <property type="match status" value="1"/>
</dbReference>
<dbReference type="InterPro" id="IPR005764">
    <property type="entry name" value="Ade_phspho_trans"/>
</dbReference>
<dbReference type="InterPro" id="IPR000836">
    <property type="entry name" value="PRibTrfase_dom"/>
</dbReference>
<dbReference type="InterPro" id="IPR029057">
    <property type="entry name" value="PRTase-like"/>
</dbReference>
<dbReference type="InterPro" id="IPR050054">
    <property type="entry name" value="UPRTase/APRTase"/>
</dbReference>
<dbReference type="NCBIfam" id="TIGR01090">
    <property type="entry name" value="apt"/>
    <property type="match status" value="1"/>
</dbReference>
<dbReference type="NCBIfam" id="NF002634">
    <property type="entry name" value="PRK02304.1-3"/>
    <property type="match status" value="1"/>
</dbReference>
<dbReference type="NCBIfam" id="NF002636">
    <property type="entry name" value="PRK02304.1-5"/>
    <property type="match status" value="1"/>
</dbReference>
<dbReference type="PANTHER" id="PTHR32315">
    <property type="entry name" value="ADENINE PHOSPHORIBOSYLTRANSFERASE"/>
    <property type="match status" value="1"/>
</dbReference>
<dbReference type="PANTHER" id="PTHR32315:SF3">
    <property type="entry name" value="ADENINE PHOSPHORIBOSYLTRANSFERASE"/>
    <property type="match status" value="1"/>
</dbReference>
<dbReference type="Pfam" id="PF00156">
    <property type="entry name" value="Pribosyltran"/>
    <property type="match status" value="1"/>
</dbReference>
<dbReference type="SUPFAM" id="SSF53271">
    <property type="entry name" value="PRTase-like"/>
    <property type="match status" value="1"/>
</dbReference>
<dbReference type="PROSITE" id="PS00103">
    <property type="entry name" value="PUR_PYR_PR_TRANSFER"/>
    <property type="match status" value="1"/>
</dbReference>
<keyword id="KW-0963">Cytoplasm</keyword>
<keyword id="KW-0328">Glycosyltransferase</keyword>
<keyword id="KW-0660">Purine salvage</keyword>
<keyword id="KW-0808">Transferase</keyword>
<accession>A2C2A5</accession>
<evidence type="ECO:0000255" key="1">
    <source>
        <dbReference type="HAMAP-Rule" id="MF_00004"/>
    </source>
</evidence>
<gene>
    <name evidence="1" type="primary">apt</name>
    <name type="ordered locus">NATL1_10571</name>
</gene>